<proteinExistence type="inferred from homology"/>
<protein>
    <recommendedName>
        <fullName evidence="1">Large ribosomal subunit protein uL24</fullName>
    </recommendedName>
    <alternativeName>
        <fullName evidence="2">50S ribosomal protein L24</fullName>
    </alternativeName>
</protein>
<comment type="function">
    <text evidence="1">One of two assembly initiator proteins, it binds directly to the 5'-end of the 23S rRNA, where it nucleates assembly of the 50S subunit.</text>
</comment>
<comment type="function">
    <text evidence="1">One of the proteins that surrounds the polypeptide exit tunnel on the outside of the subunit.</text>
</comment>
<comment type="subunit">
    <text evidence="1">Part of the 50S ribosomal subunit.</text>
</comment>
<comment type="similarity">
    <text evidence="1">Belongs to the universal ribosomal protein uL24 family.</text>
</comment>
<sequence>MAAKIRRNDEVIVLTGKDKGKKGKITKVLATGKVIVEGINLVKKHQKPVPAMGVQGGIVEQEAAIDVSNVAIFNAETGKADRVGFRFEDDKKVRFFKSNSVTIK</sequence>
<gene>
    <name evidence="1" type="primary">rplX</name>
    <name type="ordered locus">PBPRA0331</name>
</gene>
<name>RL24_PHOPR</name>
<dbReference type="EMBL" id="CR378663">
    <property type="protein sequence ID" value="CAG18770.1"/>
    <property type="molecule type" value="Genomic_DNA"/>
</dbReference>
<dbReference type="RefSeq" id="WP_011217136.1">
    <property type="nucleotide sequence ID" value="NC_006370.1"/>
</dbReference>
<dbReference type="SMR" id="Q6LVA5"/>
<dbReference type="STRING" id="298386.PBPRA0331"/>
<dbReference type="KEGG" id="ppr:PBPRA0331"/>
<dbReference type="eggNOG" id="COG0198">
    <property type="taxonomic scope" value="Bacteria"/>
</dbReference>
<dbReference type="HOGENOM" id="CLU_093315_2_2_6"/>
<dbReference type="Proteomes" id="UP000000593">
    <property type="component" value="Chromosome 1"/>
</dbReference>
<dbReference type="GO" id="GO:1990904">
    <property type="term" value="C:ribonucleoprotein complex"/>
    <property type="evidence" value="ECO:0007669"/>
    <property type="project" value="UniProtKB-KW"/>
</dbReference>
<dbReference type="GO" id="GO:0005840">
    <property type="term" value="C:ribosome"/>
    <property type="evidence" value="ECO:0007669"/>
    <property type="project" value="UniProtKB-KW"/>
</dbReference>
<dbReference type="GO" id="GO:0019843">
    <property type="term" value="F:rRNA binding"/>
    <property type="evidence" value="ECO:0007669"/>
    <property type="project" value="UniProtKB-UniRule"/>
</dbReference>
<dbReference type="GO" id="GO:0003735">
    <property type="term" value="F:structural constituent of ribosome"/>
    <property type="evidence" value="ECO:0007669"/>
    <property type="project" value="InterPro"/>
</dbReference>
<dbReference type="GO" id="GO:0006412">
    <property type="term" value="P:translation"/>
    <property type="evidence" value="ECO:0007669"/>
    <property type="project" value="UniProtKB-UniRule"/>
</dbReference>
<dbReference type="CDD" id="cd06089">
    <property type="entry name" value="KOW_RPL26"/>
    <property type="match status" value="1"/>
</dbReference>
<dbReference type="FunFam" id="2.30.30.30:FF:000004">
    <property type="entry name" value="50S ribosomal protein L24"/>
    <property type="match status" value="1"/>
</dbReference>
<dbReference type="Gene3D" id="2.30.30.30">
    <property type="match status" value="1"/>
</dbReference>
<dbReference type="HAMAP" id="MF_01326_B">
    <property type="entry name" value="Ribosomal_uL24_B"/>
    <property type="match status" value="1"/>
</dbReference>
<dbReference type="InterPro" id="IPR005824">
    <property type="entry name" value="KOW"/>
</dbReference>
<dbReference type="InterPro" id="IPR014722">
    <property type="entry name" value="Rib_uL2_dom2"/>
</dbReference>
<dbReference type="InterPro" id="IPR003256">
    <property type="entry name" value="Ribosomal_uL24"/>
</dbReference>
<dbReference type="InterPro" id="IPR005825">
    <property type="entry name" value="Ribosomal_uL24_CS"/>
</dbReference>
<dbReference type="InterPro" id="IPR041988">
    <property type="entry name" value="Ribosomal_uL24_KOW"/>
</dbReference>
<dbReference type="InterPro" id="IPR008991">
    <property type="entry name" value="Translation_prot_SH3-like_sf"/>
</dbReference>
<dbReference type="NCBIfam" id="TIGR01079">
    <property type="entry name" value="rplX_bact"/>
    <property type="match status" value="1"/>
</dbReference>
<dbReference type="PANTHER" id="PTHR12903">
    <property type="entry name" value="MITOCHONDRIAL RIBOSOMAL PROTEIN L24"/>
    <property type="match status" value="1"/>
</dbReference>
<dbReference type="Pfam" id="PF00467">
    <property type="entry name" value="KOW"/>
    <property type="match status" value="1"/>
</dbReference>
<dbReference type="Pfam" id="PF17136">
    <property type="entry name" value="ribosomal_L24"/>
    <property type="match status" value="1"/>
</dbReference>
<dbReference type="SMART" id="SM00739">
    <property type="entry name" value="KOW"/>
    <property type="match status" value="1"/>
</dbReference>
<dbReference type="SUPFAM" id="SSF50104">
    <property type="entry name" value="Translation proteins SH3-like domain"/>
    <property type="match status" value="1"/>
</dbReference>
<dbReference type="PROSITE" id="PS01108">
    <property type="entry name" value="RIBOSOMAL_L24"/>
    <property type="match status" value="1"/>
</dbReference>
<organism>
    <name type="scientific">Photobacterium profundum (strain SS9)</name>
    <dbReference type="NCBI Taxonomy" id="298386"/>
    <lineage>
        <taxon>Bacteria</taxon>
        <taxon>Pseudomonadati</taxon>
        <taxon>Pseudomonadota</taxon>
        <taxon>Gammaproteobacteria</taxon>
        <taxon>Vibrionales</taxon>
        <taxon>Vibrionaceae</taxon>
        <taxon>Photobacterium</taxon>
    </lineage>
</organism>
<reference key="1">
    <citation type="journal article" date="2005" name="Science">
        <title>Life at depth: Photobacterium profundum genome sequence and expression analysis.</title>
        <authorList>
            <person name="Vezzi A."/>
            <person name="Campanaro S."/>
            <person name="D'Angelo M."/>
            <person name="Simonato F."/>
            <person name="Vitulo N."/>
            <person name="Lauro F.M."/>
            <person name="Cestaro A."/>
            <person name="Malacrida G."/>
            <person name="Simionati B."/>
            <person name="Cannata N."/>
            <person name="Romualdi C."/>
            <person name="Bartlett D.H."/>
            <person name="Valle G."/>
        </authorList>
    </citation>
    <scope>NUCLEOTIDE SEQUENCE [LARGE SCALE GENOMIC DNA]</scope>
    <source>
        <strain>ATCC BAA-1253 / SS9</strain>
    </source>
</reference>
<keyword id="KW-1185">Reference proteome</keyword>
<keyword id="KW-0687">Ribonucleoprotein</keyword>
<keyword id="KW-0689">Ribosomal protein</keyword>
<keyword id="KW-0694">RNA-binding</keyword>
<keyword id="KW-0699">rRNA-binding</keyword>
<feature type="chain" id="PRO_0000241636" description="Large ribosomal subunit protein uL24">
    <location>
        <begin position="1"/>
        <end position="104"/>
    </location>
</feature>
<evidence type="ECO:0000255" key="1">
    <source>
        <dbReference type="HAMAP-Rule" id="MF_01326"/>
    </source>
</evidence>
<evidence type="ECO:0000305" key="2"/>
<accession>Q6LVA5</accession>